<reference key="1">
    <citation type="journal article" date="1999" name="Brain Res. Mol. Brain Res.">
        <title>Cloning and characterization of CRF, a novel C1q-related factor, expressed in areas of the brain involved in motor function.</title>
        <authorList>
            <person name="Berube N.G."/>
            <person name="Swanson X.H."/>
            <person name="Bertram M.J."/>
            <person name="Kittle J.D."/>
            <person name="Didenko V."/>
            <person name="Baskin D.S."/>
            <person name="Smith J.R."/>
            <person name="Pereira-Smith O.M."/>
        </authorList>
    </citation>
    <scope>NUCLEOTIDE SEQUENCE [MRNA]</scope>
</reference>
<reference key="2">
    <citation type="journal article" date="2009" name="PLoS Biol.">
        <title>Lineage-specific biology revealed by a finished genome assembly of the mouse.</title>
        <authorList>
            <person name="Church D.M."/>
            <person name="Goodstadt L."/>
            <person name="Hillier L.W."/>
            <person name="Zody M.C."/>
            <person name="Goldstein S."/>
            <person name="She X."/>
            <person name="Bult C.J."/>
            <person name="Agarwala R."/>
            <person name="Cherry J.L."/>
            <person name="DiCuccio M."/>
            <person name="Hlavina W."/>
            <person name="Kapustin Y."/>
            <person name="Meric P."/>
            <person name="Maglott D."/>
            <person name="Birtle Z."/>
            <person name="Marques A.C."/>
            <person name="Graves T."/>
            <person name="Zhou S."/>
            <person name="Teague B."/>
            <person name="Potamousis K."/>
            <person name="Churas C."/>
            <person name="Place M."/>
            <person name="Herschleb J."/>
            <person name="Runnheim R."/>
            <person name="Forrest D."/>
            <person name="Amos-Landgraf J."/>
            <person name="Schwartz D.C."/>
            <person name="Cheng Z."/>
            <person name="Lindblad-Toh K."/>
            <person name="Eichler E.E."/>
            <person name="Ponting C.P."/>
        </authorList>
    </citation>
    <scope>NUCLEOTIDE SEQUENCE [LARGE SCALE GENOMIC DNA]</scope>
    <source>
        <strain>C57BL/6J</strain>
    </source>
</reference>
<reference key="3">
    <citation type="submission" date="2005-07" db="EMBL/GenBank/DDBJ databases">
        <authorList>
            <person name="Mural R.J."/>
            <person name="Adams M.D."/>
            <person name="Myers E.W."/>
            <person name="Smith H.O."/>
            <person name="Venter J.C."/>
        </authorList>
    </citation>
    <scope>NUCLEOTIDE SEQUENCE [LARGE SCALE GENOMIC DNA]</scope>
</reference>
<reference key="4">
    <citation type="journal article" date="2011" name="Proc. Natl. Acad. Sci. U.S.A.">
        <title>The cell-adhesion G protein-coupled receptor BAI3 is a high-affinity receptor for C1q-like proteins.</title>
        <authorList>
            <person name="Bolliger M.F."/>
            <person name="Martinelli D.C."/>
            <person name="Sudhof T.C."/>
        </authorList>
    </citation>
    <scope>FUNCTION</scope>
    <scope>INTERACTION WITH ADGRB3</scope>
</reference>
<reference key="5">
    <citation type="journal article" date="2013" name="J. Biol. Chem.">
        <title>C1q/tumor necrosis factor-related protein 11 (CTRP11), a novel adipose stroma-derived regulator of adipogenesis.</title>
        <authorList>
            <person name="Wei Z."/>
            <person name="Seldin M.M."/>
            <person name="Natarajan N."/>
            <person name="Djemal D.C."/>
            <person name="Peterson J.M."/>
            <person name="Wong G.W."/>
        </authorList>
    </citation>
    <scope>INTERACTION WITH C1QL4</scope>
    <scope>MUTAGENESIS OF CYS-28 AND CYS-32</scope>
    <source>
        <strain>C57BL/6J</strain>
        <tissue>Testis</tissue>
    </source>
</reference>
<proteinExistence type="evidence at protein level"/>
<feature type="signal peptide" evidence="1">
    <location>
        <begin position="1"/>
        <end position="16"/>
    </location>
</feature>
<feature type="chain" id="PRO_0000003528" description="C1q-related factor">
    <location>
        <begin position="17"/>
        <end position="258"/>
    </location>
</feature>
<feature type="domain" description="Collagen-like">
    <location>
        <begin position="67"/>
        <end position="115"/>
    </location>
</feature>
<feature type="domain" description="C1q" evidence="2">
    <location>
        <begin position="125"/>
        <end position="258"/>
    </location>
</feature>
<feature type="region of interest" description="Disordered" evidence="3">
    <location>
        <begin position="39"/>
        <end position="120"/>
    </location>
</feature>
<feature type="compositionally biased region" description="Low complexity" evidence="3">
    <location>
        <begin position="67"/>
        <end position="77"/>
    </location>
</feature>
<feature type="compositionally biased region" description="Pro residues" evidence="3">
    <location>
        <begin position="78"/>
        <end position="95"/>
    </location>
</feature>
<feature type="mutagenesis site" description="Does not affect heterooligomerization with C1QL4; when associated with A-32." evidence="5">
    <original>C</original>
    <variation>A</variation>
    <location>
        <position position="28"/>
    </location>
</feature>
<feature type="mutagenesis site" description="Does not affect heterooligomerization with C1QL4; when associated with A-28." evidence="5">
    <original>C</original>
    <variation>A</variation>
    <location>
        <position position="32"/>
    </location>
</feature>
<feature type="sequence conflict" description="In Ref. 1; AAC64187." evidence="6" ref="1">
    <original>L</original>
    <variation>V</variation>
    <location>
        <position position="52"/>
    </location>
</feature>
<feature type="strand" evidence="7">
    <location>
        <begin position="131"/>
        <end position="135"/>
    </location>
</feature>
<feature type="strand" evidence="7">
    <location>
        <begin position="140"/>
        <end position="145"/>
    </location>
</feature>
<feature type="strand" evidence="7">
    <location>
        <begin position="150"/>
        <end position="155"/>
    </location>
</feature>
<feature type="turn" evidence="7">
    <location>
        <begin position="161"/>
        <end position="163"/>
    </location>
</feature>
<feature type="strand" evidence="7">
    <location>
        <begin position="172"/>
        <end position="182"/>
    </location>
</feature>
<feature type="strand" evidence="7">
    <location>
        <begin position="184"/>
        <end position="186"/>
    </location>
</feature>
<feature type="strand" evidence="7">
    <location>
        <begin position="188"/>
        <end position="196"/>
    </location>
</feature>
<feature type="strand" evidence="7">
    <location>
        <begin position="199"/>
        <end position="207"/>
    </location>
</feature>
<feature type="strand" evidence="7">
    <location>
        <begin position="214"/>
        <end position="224"/>
    </location>
</feature>
<feature type="strand" evidence="7">
    <location>
        <begin position="229"/>
        <end position="239"/>
    </location>
</feature>
<feature type="strand" evidence="8">
    <location>
        <begin position="243"/>
        <end position="245"/>
    </location>
</feature>
<feature type="strand" evidence="7">
    <location>
        <begin position="248"/>
        <end position="257"/>
    </location>
</feature>
<accession>O88992</accession>
<accession>A2AH89</accession>
<organism>
    <name type="scientific">Mus musculus</name>
    <name type="common">Mouse</name>
    <dbReference type="NCBI Taxonomy" id="10090"/>
    <lineage>
        <taxon>Eukaryota</taxon>
        <taxon>Metazoa</taxon>
        <taxon>Chordata</taxon>
        <taxon>Craniata</taxon>
        <taxon>Vertebrata</taxon>
        <taxon>Euteleostomi</taxon>
        <taxon>Mammalia</taxon>
        <taxon>Eutheria</taxon>
        <taxon>Euarchontoglires</taxon>
        <taxon>Glires</taxon>
        <taxon>Rodentia</taxon>
        <taxon>Myomorpha</taxon>
        <taxon>Muroidea</taxon>
        <taxon>Muridae</taxon>
        <taxon>Murinae</taxon>
        <taxon>Mus</taxon>
        <taxon>Mus</taxon>
    </lineage>
</organism>
<protein>
    <recommendedName>
        <fullName>C1q-related factor</fullName>
    </recommendedName>
    <alternativeName>
        <fullName>C1q and tumor necrosis factor-related protein 14</fullName>
        <shortName>C1q/TNF-related protein 14</shortName>
        <shortName>CTRP14</shortName>
    </alternativeName>
    <alternativeName>
        <fullName>Complement component 1 Q subcomponent-like 1</fullName>
    </alternativeName>
</protein>
<dbReference type="EMBL" id="AF095155">
    <property type="protein sequence ID" value="AAC64187.1"/>
    <property type="molecule type" value="mRNA"/>
</dbReference>
<dbReference type="EMBL" id="AL731670">
    <property type="status" value="NOT_ANNOTATED_CDS"/>
    <property type="molecule type" value="Genomic_DNA"/>
</dbReference>
<dbReference type="EMBL" id="CH466558">
    <property type="protein sequence ID" value="EDL34162.1"/>
    <property type="molecule type" value="Genomic_DNA"/>
</dbReference>
<dbReference type="CCDS" id="CCDS25509.1"/>
<dbReference type="RefSeq" id="NP_035925.2">
    <property type="nucleotide sequence ID" value="NM_011795.3"/>
</dbReference>
<dbReference type="PDB" id="4D7Y">
    <property type="method" value="X-ray"/>
    <property type="resolution" value="1.44 A"/>
    <property type="chains" value="A=125-258"/>
</dbReference>
<dbReference type="PDB" id="4QQ2">
    <property type="method" value="X-ray"/>
    <property type="resolution" value="1.80 A"/>
    <property type="chains" value="A/B/C=122-258"/>
</dbReference>
<dbReference type="PDBsum" id="4D7Y"/>
<dbReference type="PDBsum" id="4QQ2"/>
<dbReference type="SMR" id="O88992"/>
<dbReference type="DIP" id="DIP-61402N"/>
<dbReference type="FunCoup" id="O88992">
    <property type="interactions" value="85"/>
</dbReference>
<dbReference type="STRING" id="10090.ENSMUSP00000050469"/>
<dbReference type="PhosphoSitePlus" id="O88992"/>
<dbReference type="PaxDb" id="10090-ENSMUSP00000050469"/>
<dbReference type="PeptideAtlas" id="O88992"/>
<dbReference type="ProteomicsDB" id="273854"/>
<dbReference type="Antibodypedia" id="29941">
    <property type="antibodies" value="69 antibodies from 18 providers"/>
</dbReference>
<dbReference type="DNASU" id="23829"/>
<dbReference type="Ensembl" id="ENSMUST00000057849.6">
    <property type="protein sequence ID" value="ENSMUSP00000050469.6"/>
    <property type="gene ID" value="ENSMUSG00000045532.6"/>
</dbReference>
<dbReference type="GeneID" id="23829"/>
<dbReference type="KEGG" id="mmu:23829"/>
<dbReference type="UCSC" id="uc007lsz.2">
    <property type="organism name" value="mouse"/>
</dbReference>
<dbReference type="AGR" id="MGI:1344400"/>
<dbReference type="CTD" id="10882"/>
<dbReference type="MGI" id="MGI:1344400">
    <property type="gene designation" value="C1ql1"/>
</dbReference>
<dbReference type="VEuPathDB" id="HostDB:ENSMUSG00000045532"/>
<dbReference type="eggNOG" id="ENOG502QSKV">
    <property type="taxonomic scope" value="Eukaryota"/>
</dbReference>
<dbReference type="GeneTree" id="ENSGT00940000162478"/>
<dbReference type="HOGENOM" id="CLU_001074_3_1_1"/>
<dbReference type="InParanoid" id="O88992"/>
<dbReference type="OMA" id="NYDGIAG"/>
<dbReference type="OrthoDB" id="10070467at2759"/>
<dbReference type="PhylomeDB" id="O88992"/>
<dbReference type="TreeFam" id="TF329591"/>
<dbReference type="BioGRID-ORCS" id="23829">
    <property type="hits" value="1 hit in 78 CRISPR screens"/>
</dbReference>
<dbReference type="EvolutionaryTrace" id="O88992"/>
<dbReference type="PRO" id="PR:O88992"/>
<dbReference type="Proteomes" id="UP000000589">
    <property type="component" value="Chromosome 11"/>
</dbReference>
<dbReference type="RNAct" id="O88992">
    <property type="molecule type" value="protein"/>
</dbReference>
<dbReference type="Bgee" id="ENSMUSG00000045532">
    <property type="expression patterns" value="Expressed in retinal neural layer and 90 other cell types or tissues"/>
</dbReference>
<dbReference type="ExpressionAtlas" id="O88992">
    <property type="expression patterns" value="baseline and differential"/>
</dbReference>
<dbReference type="GO" id="GO:0150053">
    <property type="term" value="C:cerebellar climbing fiber to Purkinje cell synapse"/>
    <property type="evidence" value="ECO:0000314"/>
    <property type="project" value="SynGO"/>
</dbReference>
<dbReference type="GO" id="GO:0044301">
    <property type="term" value="C:climbing fiber"/>
    <property type="evidence" value="ECO:0000314"/>
    <property type="project" value="MGI"/>
</dbReference>
<dbReference type="GO" id="GO:0005581">
    <property type="term" value="C:collagen trimer"/>
    <property type="evidence" value="ECO:0007669"/>
    <property type="project" value="UniProtKB-KW"/>
</dbReference>
<dbReference type="GO" id="GO:0005737">
    <property type="term" value="C:cytoplasm"/>
    <property type="evidence" value="ECO:0000314"/>
    <property type="project" value="MGI"/>
</dbReference>
<dbReference type="GO" id="GO:0098793">
    <property type="term" value="C:presynapse"/>
    <property type="evidence" value="ECO:0000314"/>
    <property type="project" value="MGI"/>
</dbReference>
<dbReference type="GO" id="GO:0043083">
    <property type="term" value="C:synaptic cleft"/>
    <property type="evidence" value="ECO:0000314"/>
    <property type="project" value="MGI"/>
</dbReference>
<dbReference type="GO" id="GO:0005102">
    <property type="term" value="F:signaling receptor binding"/>
    <property type="evidence" value="ECO:0000353"/>
    <property type="project" value="MGI"/>
</dbReference>
<dbReference type="GO" id="GO:0099558">
    <property type="term" value="P:maintenance of synapse structure"/>
    <property type="evidence" value="ECO:0000315"/>
    <property type="project" value="MGI"/>
</dbReference>
<dbReference type="GO" id="GO:0061743">
    <property type="term" value="P:motor learning"/>
    <property type="evidence" value="ECO:0000316"/>
    <property type="project" value="MGI"/>
</dbReference>
<dbReference type="GO" id="GO:0016322">
    <property type="term" value="P:neuron remodeling"/>
    <property type="evidence" value="ECO:0000315"/>
    <property type="project" value="MGI"/>
</dbReference>
<dbReference type="GO" id="GO:1905806">
    <property type="term" value="P:regulation of synapse pruning"/>
    <property type="evidence" value="ECO:0000314"/>
    <property type="project" value="SynGO"/>
</dbReference>
<dbReference type="FunFam" id="2.60.120.40:FF:000001">
    <property type="entry name" value="Complement C1q B chain"/>
    <property type="match status" value="1"/>
</dbReference>
<dbReference type="Gene3D" id="2.60.120.40">
    <property type="match status" value="1"/>
</dbReference>
<dbReference type="Gene3D" id="1.20.5.320">
    <property type="entry name" value="6-Phosphogluconate Dehydrogenase, domain 3"/>
    <property type="match status" value="1"/>
</dbReference>
<dbReference type="InterPro" id="IPR001073">
    <property type="entry name" value="C1q_dom"/>
</dbReference>
<dbReference type="InterPro" id="IPR050822">
    <property type="entry name" value="Cerebellin_Synaptic_Org"/>
</dbReference>
<dbReference type="InterPro" id="IPR008160">
    <property type="entry name" value="Collagen"/>
</dbReference>
<dbReference type="InterPro" id="IPR008983">
    <property type="entry name" value="Tumour_necrosis_fac-like_dom"/>
</dbReference>
<dbReference type="PANTHER" id="PTHR22923:SF64">
    <property type="entry name" value="C1Q-RELATED FACTOR"/>
    <property type="match status" value="1"/>
</dbReference>
<dbReference type="PANTHER" id="PTHR22923">
    <property type="entry name" value="CEREBELLIN-RELATED"/>
    <property type="match status" value="1"/>
</dbReference>
<dbReference type="Pfam" id="PF00386">
    <property type="entry name" value="C1q"/>
    <property type="match status" value="1"/>
</dbReference>
<dbReference type="Pfam" id="PF01391">
    <property type="entry name" value="Collagen"/>
    <property type="match status" value="1"/>
</dbReference>
<dbReference type="PRINTS" id="PR00007">
    <property type="entry name" value="COMPLEMNTC1Q"/>
</dbReference>
<dbReference type="SMART" id="SM00110">
    <property type="entry name" value="C1Q"/>
    <property type="match status" value="1"/>
</dbReference>
<dbReference type="SUPFAM" id="SSF49842">
    <property type="entry name" value="TNF-like"/>
    <property type="match status" value="1"/>
</dbReference>
<dbReference type="PROSITE" id="PS50871">
    <property type="entry name" value="C1Q"/>
    <property type="match status" value="1"/>
</dbReference>
<sequence>MLLVLVVLIPVLVSSGGPDGHYEMLGTCRMVCDPYPARGPGAGARSDGGDALSEQSGAPPPSTLVQGPQGKPGRTGKPGPPGPPGDRGPPGPVGPPGEKGEPGKPGPPGLPGSGGSGAISTATYTTVPRVAFYAGLKNPHEGYEVLKFDDVVTNLGNNYDAASGKFTCNIPGTYFFTYHVLMRGGDGTSMWADLCKNGQVRASAIAQDADQNYDYASNSVILHLDAGDEVFIKLDGGKAHGGNSNKYSTFSGFIIYSD</sequence>
<keyword id="KW-0002">3D-structure</keyword>
<keyword id="KW-0176">Collagen</keyword>
<keyword id="KW-1185">Reference proteome</keyword>
<keyword id="KW-0964">Secreted</keyword>
<keyword id="KW-0732">Signal</keyword>
<gene>
    <name type="primary">C1ql1</name>
    <name type="synonym">C1qrf</name>
    <name type="synonym">Crf</name>
    <name type="synonym">Ctrp14</name>
</gene>
<name>C1QRF_MOUSE</name>
<comment type="function">
    <text evidence="4">May regulate the number of excitatory synapses that are formed on hippocampus neurons. Has no effect on inhibitory synapses.</text>
</comment>
<comment type="subunit">
    <text evidence="4 5">Interacts with ADGRB3 (PubMed:21262840). Forms heterooligomers with C1QL4, when proteins are coexpressed; this interaction does not occur after secretion (PubMed:23449976).</text>
</comment>
<comment type="subcellular location">
    <subcellularLocation>
        <location>Secreted</location>
    </subcellularLocation>
</comment>
<comment type="tissue specificity">
    <text>Expressed in brainstem. More abundant in areas of the nervous system involved in motor function, such as the Purkinje cells of the cerebellum, the accessory olivary nucleus, the pons and the red nucleus.</text>
</comment>
<evidence type="ECO:0000255" key="1"/>
<evidence type="ECO:0000255" key="2">
    <source>
        <dbReference type="PROSITE-ProRule" id="PRU00368"/>
    </source>
</evidence>
<evidence type="ECO:0000256" key="3">
    <source>
        <dbReference type="SAM" id="MobiDB-lite"/>
    </source>
</evidence>
<evidence type="ECO:0000269" key="4">
    <source>
    </source>
</evidence>
<evidence type="ECO:0000269" key="5">
    <source>
    </source>
</evidence>
<evidence type="ECO:0000305" key="6"/>
<evidence type="ECO:0007829" key="7">
    <source>
        <dbReference type="PDB" id="4D7Y"/>
    </source>
</evidence>
<evidence type="ECO:0007829" key="8">
    <source>
        <dbReference type="PDB" id="4QQ2"/>
    </source>
</evidence>